<proteinExistence type="evidence at protein level"/>
<name>LEPP_BACNA</name>
<accession>P37943</accession>
<protein>
    <recommendedName>
        <fullName>Signal peptidase I P</fullName>
        <shortName>SPase I</shortName>
        <ecNumber>3.4.21.89</ecNumber>
    </recommendedName>
    <alternativeName>
        <fullName>Leader peptidase I</fullName>
    </alternativeName>
</protein>
<sequence length="186" mass="21252">MTKEKVFKKKSSILEWGKAIVIAVILALLIRNFLFEPYVVEGKSMDPTLVDSERLFVNKTVKYTGNFKRGDIIILNGKEKSTHYVKRLIGLPGDTVEMKNDHLFINGNEVKEPYLSYNKENAKKVGINLTGDFGPIKVPKDKYFVMGDNRQESMDSRNGLGLFTKDDIQGTEEFVFFPFSNMRKAK</sequence>
<keyword id="KW-1003">Cell membrane</keyword>
<keyword id="KW-0378">Hydrolase</keyword>
<keyword id="KW-0472">Membrane</keyword>
<keyword id="KW-0614">Plasmid</keyword>
<keyword id="KW-0645">Protease</keyword>
<keyword id="KW-0812">Transmembrane</keyword>
<keyword id="KW-1133">Transmembrane helix</keyword>
<geneLocation type="plasmid">
    <name>pTA1015</name>
</geneLocation>
<gene>
    <name type="primary">sipP</name>
</gene>
<feature type="chain" id="PRO_0000109497" description="Signal peptidase I P">
    <location>
        <begin position="1"/>
        <end position="186"/>
    </location>
</feature>
<feature type="topological domain" description="Cytoplasmic" evidence="2">
    <location>
        <begin position="1"/>
        <end position="15"/>
    </location>
</feature>
<feature type="transmembrane region" description="Helical" evidence="2">
    <location>
        <begin position="16"/>
        <end position="35"/>
    </location>
</feature>
<feature type="topological domain" description="Extracellular" evidence="2">
    <location>
        <begin position="36"/>
        <end position="186"/>
    </location>
</feature>
<feature type="active site" evidence="1">
    <location>
        <position position="44"/>
    </location>
</feature>
<feature type="active site" evidence="1">
    <location>
        <position position="86"/>
    </location>
</feature>
<feature type="mutagenesis site" description="No effect." evidence="3">
    <original>K</original>
    <variation>N</variation>
    <location>
        <position position="62"/>
    </location>
</feature>
<reference key="1">
    <citation type="journal article" date="1995" name="Mol. Microbiol.">
        <title>The endogenous Bacillus subtilis (natto) plasmids pTA1015 and pTA1040 contain signal peptidase-encoding genes: identification of a new structural module on cryptic plasmids.</title>
        <authorList>
            <person name="Meijer W.J.J."/>
            <person name="de Jong A."/>
            <person name="Bea G."/>
            <person name="Wisman A."/>
            <person name="Tjalsma H."/>
            <person name="Venema G."/>
            <person name="Bron S."/>
            <person name="van Dijl J.M."/>
        </authorList>
    </citation>
    <scope>NUCLEOTIDE SEQUENCE [GENOMIC DNA]</scope>
    <scope>MUTAGENESIS</scope>
    <source>
        <strain>IAM 1028</strain>
    </source>
</reference>
<organism>
    <name type="scientific">Bacillus subtilis subsp. natto</name>
    <dbReference type="NCBI Taxonomy" id="86029"/>
    <lineage>
        <taxon>Bacteria</taxon>
        <taxon>Bacillati</taxon>
        <taxon>Bacillota</taxon>
        <taxon>Bacilli</taxon>
        <taxon>Bacillales</taxon>
        <taxon>Bacillaceae</taxon>
        <taxon>Bacillus</taxon>
    </lineage>
</organism>
<comment type="catalytic activity">
    <reaction>
        <text>Cleavage of hydrophobic, N-terminal signal or leader sequences from secreted and periplasmic proteins.</text>
        <dbReference type="EC" id="3.4.21.89"/>
    </reaction>
</comment>
<comment type="subcellular location">
    <subcellularLocation>
        <location evidence="4">Cell membrane</location>
        <topology evidence="4">Single-pass type II membrane protein</topology>
    </subcellularLocation>
</comment>
<comment type="similarity">
    <text evidence="4">Belongs to the peptidase S26 family.</text>
</comment>
<evidence type="ECO:0000250" key="1"/>
<evidence type="ECO:0000255" key="2"/>
<evidence type="ECO:0000269" key="3">
    <source>
    </source>
</evidence>
<evidence type="ECO:0000305" key="4"/>
<dbReference type="EC" id="3.4.21.89"/>
<dbReference type="EMBL" id="Z27459">
    <property type="protein sequence ID" value="CAA81815.1"/>
    <property type="molecule type" value="Genomic_DNA"/>
</dbReference>
<dbReference type="EMBL" id="U32379">
    <property type="protein sequence ID" value="AAC44415.1"/>
    <property type="molecule type" value="Genomic_DNA"/>
</dbReference>
<dbReference type="PIR" id="I40470">
    <property type="entry name" value="I40470"/>
</dbReference>
<dbReference type="RefSeq" id="NP_053783.1">
    <property type="nucleotide sequence ID" value="NC_001765.1"/>
</dbReference>
<dbReference type="SMR" id="P37943"/>
<dbReference type="MEROPS" id="S26.007"/>
<dbReference type="GO" id="GO:0005886">
    <property type="term" value="C:plasma membrane"/>
    <property type="evidence" value="ECO:0007669"/>
    <property type="project" value="UniProtKB-SubCell"/>
</dbReference>
<dbReference type="GO" id="GO:0004252">
    <property type="term" value="F:serine-type endopeptidase activity"/>
    <property type="evidence" value="ECO:0007669"/>
    <property type="project" value="UniProtKB-EC"/>
</dbReference>
<dbReference type="GO" id="GO:0006465">
    <property type="term" value="P:signal peptide processing"/>
    <property type="evidence" value="ECO:0007669"/>
    <property type="project" value="InterPro"/>
</dbReference>
<dbReference type="CDD" id="cd06530">
    <property type="entry name" value="S26_SPase_I"/>
    <property type="match status" value="1"/>
</dbReference>
<dbReference type="FunFam" id="2.10.109.10:FF:000008">
    <property type="entry name" value="Signal peptidase I"/>
    <property type="match status" value="1"/>
</dbReference>
<dbReference type="Gene3D" id="2.10.109.10">
    <property type="entry name" value="Umud Fragment, subunit A"/>
    <property type="match status" value="1"/>
</dbReference>
<dbReference type="InterPro" id="IPR036286">
    <property type="entry name" value="LexA/Signal_pep-like_sf"/>
</dbReference>
<dbReference type="InterPro" id="IPR000223">
    <property type="entry name" value="Pept_S26A_signal_pept_1"/>
</dbReference>
<dbReference type="InterPro" id="IPR019758">
    <property type="entry name" value="Pept_S26A_signal_pept_1_CS"/>
</dbReference>
<dbReference type="InterPro" id="IPR019757">
    <property type="entry name" value="Pept_S26A_signal_pept_1_Lys-AS"/>
</dbReference>
<dbReference type="InterPro" id="IPR019756">
    <property type="entry name" value="Pept_S26A_signal_pept_1_Ser-AS"/>
</dbReference>
<dbReference type="InterPro" id="IPR019533">
    <property type="entry name" value="Peptidase_S26"/>
</dbReference>
<dbReference type="NCBIfam" id="TIGR02227">
    <property type="entry name" value="sigpep_I_bact"/>
    <property type="match status" value="1"/>
</dbReference>
<dbReference type="PANTHER" id="PTHR43390:SF1">
    <property type="entry name" value="CHLOROPLAST PROCESSING PEPTIDASE"/>
    <property type="match status" value="1"/>
</dbReference>
<dbReference type="PANTHER" id="PTHR43390">
    <property type="entry name" value="SIGNAL PEPTIDASE I"/>
    <property type="match status" value="1"/>
</dbReference>
<dbReference type="Pfam" id="PF10502">
    <property type="entry name" value="Peptidase_S26"/>
    <property type="match status" value="1"/>
</dbReference>
<dbReference type="PRINTS" id="PR00727">
    <property type="entry name" value="LEADERPTASE"/>
</dbReference>
<dbReference type="SUPFAM" id="SSF51306">
    <property type="entry name" value="LexA/Signal peptidase"/>
    <property type="match status" value="1"/>
</dbReference>
<dbReference type="PROSITE" id="PS00501">
    <property type="entry name" value="SPASE_I_1"/>
    <property type="match status" value="1"/>
</dbReference>
<dbReference type="PROSITE" id="PS00760">
    <property type="entry name" value="SPASE_I_2"/>
    <property type="match status" value="1"/>
</dbReference>
<dbReference type="PROSITE" id="PS00761">
    <property type="entry name" value="SPASE_I_3"/>
    <property type="match status" value="1"/>
</dbReference>